<feature type="chain" id="PRO_0000386841" description="Ribosomal RNA small subunit methyltransferase H">
    <location>
        <begin position="1"/>
        <end position="300"/>
    </location>
</feature>
<feature type="binding site" evidence="1">
    <location>
        <begin position="43"/>
        <end position="45"/>
    </location>
    <ligand>
        <name>S-adenosyl-L-methionine</name>
        <dbReference type="ChEBI" id="CHEBI:59789"/>
    </ligand>
</feature>
<feature type="binding site" evidence="1">
    <location>
        <position position="60"/>
    </location>
    <ligand>
        <name>S-adenosyl-L-methionine</name>
        <dbReference type="ChEBI" id="CHEBI:59789"/>
    </ligand>
</feature>
<feature type="binding site" evidence="1">
    <location>
        <position position="105"/>
    </location>
    <ligand>
        <name>S-adenosyl-L-methionine</name>
        <dbReference type="ChEBI" id="CHEBI:59789"/>
    </ligand>
</feature>
<feature type="binding site" evidence="1">
    <location>
        <position position="112"/>
    </location>
    <ligand>
        <name>S-adenosyl-L-methionine</name>
        <dbReference type="ChEBI" id="CHEBI:59789"/>
    </ligand>
</feature>
<gene>
    <name evidence="1" type="primary">rsmH</name>
    <name type="synonym">mraW</name>
    <name type="ordered locus">Deide_08670</name>
</gene>
<dbReference type="EC" id="2.1.1.199" evidence="1"/>
<dbReference type="EMBL" id="CP001114">
    <property type="protein sequence ID" value="ACO45742.1"/>
    <property type="molecule type" value="Genomic_DNA"/>
</dbReference>
<dbReference type="RefSeq" id="WP_012692865.1">
    <property type="nucleotide sequence ID" value="NC_012526.1"/>
</dbReference>
<dbReference type="SMR" id="C1D1L8"/>
<dbReference type="STRING" id="546414.Deide_08670"/>
<dbReference type="PaxDb" id="546414-Deide_08670"/>
<dbReference type="KEGG" id="ddr:Deide_08670"/>
<dbReference type="eggNOG" id="COG0275">
    <property type="taxonomic scope" value="Bacteria"/>
</dbReference>
<dbReference type="HOGENOM" id="CLU_038422_1_1_0"/>
<dbReference type="OrthoDB" id="9806637at2"/>
<dbReference type="Proteomes" id="UP000002208">
    <property type="component" value="Chromosome"/>
</dbReference>
<dbReference type="GO" id="GO:0005737">
    <property type="term" value="C:cytoplasm"/>
    <property type="evidence" value="ECO:0007669"/>
    <property type="project" value="UniProtKB-SubCell"/>
</dbReference>
<dbReference type="GO" id="GO:0071424">
    <property type="term" value="F:rRNA (cytosine-N4-)-methyltransferase activity"/>
    <property type="evidence" value="ECO:0007669"/>
    <property type="project" value="UniProtKB-UniRule"/>
</dbReference>
<dbReference type="GO" id="GO:0070475">
    <property type="term" value="P:rRNA base methylation"/>
    <property type="evidence" value="ECO:0007669"/>
    <property type="project" value="UniProtKB-UniRule"/>
</dbReference>
<dbReference type="CDD" id="cd02440">
    <property type="entry name" value="AdoMet_MTases"/>
    <property type="match status" value="1"/>
</dbReference>
<dbReference type="FunFam" id="1.10.150.170:FF:000003">
    <property type="entry name" value="Ribosomal RNA small subunit methyltransferase H"/>
    <property type="match status" value="1"/>
</dbReference>
<dbReference type="Gene3D" id="1.10.150.170">
    <property type="entry name" value="Putative methyltransferase TM0872, insert domain"/>
    <property type="match status" value="1"/>
</dbReference>
<dbReference type="Gene3D" id="3.40.50.150">
    <property type="entry name" value="Vaccinia Virus protein VP39"/>
    <property type="match status" value="1"/>
</dbReference>
<dbReference type="HAMAP" id="MF_01007">
    <property type="entry name" value="16SrRNA_methyltr_H"/>
    <property type="match status" value="1"/>
</dbReference>
<dbReference type="InterPro" id="IPR002903">
    <property type="entry name" value="RsmH"/>
</dbReference>
<dbReference type="InterPro" id="IPR023397">
    <property type="entry name" value="SAM-dep_MeTrfase_MraW_recog"/>
</dbReference>
<dbReference type="InterPro" id="IPR029063">
    <property type="entry name" value="SAM-dependent_MTases_sf"/>
</dbReference>
<dbReference type="NCBIfam" id="TIGR00006">
    <property type="entry name" value="16S rRNA (cytosine(1402)-N(4))-methyltransferase RsmH"/>
    <property type="match status" value="1"/>
</dbReference>
<dbReference type="PANTHER" id="PTHR11265:SF0">
    <property type="entry name" value="12S RRNA N4-METHYLCYTIDINE METHYLTRANSFERASE"/>
    <property type="match status" value="1"/>
</dbReference>
<dbReference type="PANTHER" id="PTHR11265">
    <property type="entry name" value="S-ADENOSYL-METHYLTRANSFERASE MRAW"/>
    <property type="match status" value="1"/>
</dbReference>
<dbReference type="Pfam" id="PF01795">
    <property type="entry name" value="Methyltransf_5"/>
    <property type="match status" value="1"/>
</dbReference>
<dbReference type="PIRSF" id="PIRSF004486">
    <property type="entry name" value="MraW"/>
    <property type="match status" value="1"/>
</dbReference>
<dbReference type="SUPFAM" id="SSF81799">
    <property type="entry name" value="Putative methyltransferase TM0872, insert domain"/>
    <property type="match status" value="1"/>
</dbReference>
<dbReference type="SUPFAM" id="SSF53335">
    <property type="entry name" value="S-adenosyl-L-methionine-dependent methyltransferases"/>
    <property type="match status" value="1"/>
</dbReference>
<comment type="function">
    <text evidence="1">Specifically methylates the N4 position of cytidine in position 1402 (C1402) of 16S rRNA.</text>
</comment>
<comment type="catalytic activity">
    <reaction evidence="1">
        <text>cytidine(1402) in 16S rRNA + S-adenosyl-L-methionine = N(4)-methylcytidine(1402) in 16S rRNA + S-adenosyl-L-homocysteine + H(+)</text>
        <dbReference type="Rhea" id="RHEA:42928"/>
        <dbReference type="Rhea" id="RHEA-COMP:10286"/>
        <dbReference type="Rhea" id="RHEA-COMP:10287"/>
        <dbReference type="ChEBI" id="CHEBI:15378"/>
        <dbReference type="ChEBI" id="CHEBI:57856"/>
        <dbReference type="ChEBI" id="CHEBI:59789"/>
        <dbReference type="ChEBI" id="CHEBI:74506"/>
        <dbReference type="ChEBI" id="CHEBI:82748"/>
        <dbReference type="EC" id="2.1.1.199"/>
    </reaction>
</comment>
<comment type="subcellular location">
    <subcellularLocation>
        <location evidence="1">Cytoplasm</location>
    </subcellularLocation>
</comment>
<comment type="similarity">
    <text evidence="1">Belongs to the methyltransferase superfamily. RsmH family.</text>
</comment>
<reference key="1">
    <citation type="journal article" date="2009" name="PLoS Genet.">
        <title>Alliance of proteomics and genomics to unravel the specificities of Sahara bacterium Deinococcus deserti.</title>
        <authorList>
            <person name="de Groot A."/>
            <person name="Dulermo R."/>
            <person name="Ortet P."/>
            <person name="Blanchard L."/>
            <person name="Guerin P."/>
            <person name="Fernandez B."/>
            <person name="Vacherie B."/>
            <person name="Dossat C."/>
            <person name="Jolivet E."/>
            <person name="Siguier P."/>
            <person name="Chandler M."/>
            <person name="Barakat M."/>
            <person name="Dedieu A."/>
            <person name="Barbe V."/>
            <person name="Heulin T."/>
            <person name="Sommer S."/>
            <person name="Achouak W."/>
            <person name="Armengaud J."/>
        </authorList>
    </citation>
    <scope>NUCLEOTIDE SEQUENCE [LARGE SCALE GENOMIC DNA]</scope>
    <source>
        <strain>DSM 17065 / CIP 109153 / LMG 22923 / VCD115</strain>
    </source>
</reference>
<accession>C1D1L8</accession>
<proteinExistence type="inferred from homology"/>
<evidence type="ECO:0000255" key="1">
    <source>
        <dbReference type="HAMAP-Rule" id="MF_01007"/>
    </source>
</evidence>
<protein>
    <recommendedName>
        <fullName evidence="1">Ribosomal RNA small subunit methyltransferase H</fullName>
        <ecNumber evidence="1">2.1.1.199</ecNumber>
    </recommendedName>
    <alternativeName>
        <fullName evidence="1">16S rRNA m(4)C1402 methyltransferase</fullName>
    </alternativeName>
    <alternativeName>
        <fullName evidence="1">rRNA (cytosine-N(4)-)-methyltransferase RsmH</fullName>
    </alternativeName>
</protein>
<organism>
    <name type="scientific">Deinococcus deserti (strain DSM 17065 / CIP 109153 / LMG 22923 / VCD115)</name>
    <dbReference type="NCBI Taxonomy" id="546414"/>
    <lineage>
        <taxon>Bacteria</taxon>
        <taxon>Thermotogati</taxon>
        <taxon>Deinococcota</taxon>
        <taxon>Deinococci</taxon>
        <taxon>Deinococcales</taxon>
        <taxon>Deinococcaceae</taxon>
        <taxon>Deinococcus</taxon>
    </lineage>
</organism>
<sequence>MTLPEDTTTAESLIHTSVLSAEVLEALAPTPGKTIVDGTLGGAGHTRLLLEAGAHVYGIDQDPFALDRAREAGLPNLTVLQGNYRDMVSLLEQAGVSQVDGILLDIGVSSFQLDDAGRGFSYHTEAPLDMRMSQSGESAADVVNTYEEEDLAAIIYEYGEDRLSRRIARAIGQARQKAPIETTVQLAEIVKRAYPGFSKGIHPARRTFQALRIHVNDELGALRDGLQAAETLLRPGGRLAVISFHSLEDRIVKRFLLGSEVLQPLTKRPVVASDEEQAINPRSRSAKLRAAERVVVQEAS</sequence>
<name>RSMH_DEIDV</name>
<keyword id="KW-0963">Cytoplasm</keyword>
<keyword id="KW-0489">Methyltransferase</keyword>
<keyword id="KW-1185">Reference proteome</keyword>
<keyword id="KW-0698">rRNA processing</keyword>
<keyword id="KW-0949">S-adenosyl-L-methionine</keyword>
<keyword id="KW-0808">Transferase</keyword>